<evidence type="ECO:0000255" key="1">
    <source>
        <dbReference type="HAMAP-Rule" id="MF_01337"/>
    </source>
</evidence>
<evidence type="ECO:0000256" key="2">
    <source>
        <dbReference type="SAM" id="MobiDB-lite"/>
    </source>
</evidence>
<evidence type="ECO:0000305" key="3"/>
<comment type="function">
    <text evidence="1">This is one of the proteins that bind and probably mediate the attachment of the 5S RNA into the large ribosomal subunit, where it forms part of the central protuberance.</text>
</comment>
<comment type="subunit">
    <text evidence="1">Part of the 50S ribosomal subunit; part of the 5S rRNA/L5/L18/L25 subcomplex. Contacts the 5S and 23S rRNAs.</text>
</comment>
<comment type="similarity">
    <text evidence="1">Belongs to the universal ribosomal protein uL18 family.</text>
</comment>
<reference key="1">
    <citation type="journal article" date="2008" name="Genome Res.">
        <title>The genome of Pelotomaculum thermopropionicum reveals niche-associated evolution in anaerobic microbiota.</title>
        <authorList>
            <person name="Kosaka T."/>
            <person name="Kato S."/>
            <person name="Shimoyama T."/>
            <person name="Ishii S."/>
            <person name="Abe T."/>
            <person name="Watanabe K."/>
        </authorList>
    </citation>
    <scope>NUCLEOTIDE SEQUENCE [LARGE SCALE GENOMIC DNA]</scope>
    <source>
        <strain>DSM 13744 / JCM 10971 / SI</strain>
    </source>
</reference>
<gene>
    <name evidence="1" type="primary">rplR</name>
    <name type="ordered locus">PTH_0335</name>
</gene>
<sequence>MLKKPDRNALRDKRRRRVRKKIRGTAERPRLNVFRSLQNIYAQIIDDDRGVTLVSASTLAPELKGKLPSGGNTAAAAAVGELLAKKAIEAGIKRVVFDRAGYVYHGRVKALAEAARAGGLEF</sequence>
<proteinExistence type="inferred from homology"/>
<keyword id="KW-1185">Reference proteome</keyword>
<keyword id="KW-0687">Ribonucleoprotein</keyword>
<keyword id="KW-0689">Ribosomal protein</keyword>
<keyword id="KW-0694">RNA-binding</keyword>
<keyword id="KW-0699">rRNA-binding</keyword>
<accession>A5D5H0</accession>
<dbReference type="EMBL" id="AP009389">
    <property type="protein sequence ID" value="BAF58516.1"/>
    <property type="molecule type" value="Genomic_DNA"/>
</dbReference>
<dbReference type="SMR" id="A5D5H0"/>
<dbReference type="STRING" id="370438.PTH_0335"/>
<dbReference type="KEGG" id="pth:PTH_0335"/>
<dbReference type="eggNOG" id="COG0256">
    <property type="taxonomic scope" value="Bacteria"/>
</dbReference>
<dbReference type="HOGENOM" id="CLU_098841_0_1_9"/>
<dbReference type="Proteomes" id="UP000006556">
    <property type="component" value="Chromosome"/>
</dbReference>
<dbReference type="GO" id="GO:0022625">
    <property type="term" value="C:cytosolic large ribosomal subunit"/>
    <property type="evidence" value="ECO:0007669"/>
    <property type="project" value="TreeGrafter"/>
</dbReference>
<dbReference type="GO" id="GO:0008097">
    <property type="term" value="F:5S rRNA binding"/>
    <property type="evidence" value="ECO:0007669"/>
    <property type="project" value="TreeGrafter"/>
</dbReference>
<dbReference type="GO" id="GO:0003735">
    <property type="term" value="F:structural constituent of ribosome"/>
    <property type="evidence" value="ECO:0007669"/>
    <property type="project" value="InterPro"/>
</dbReference>
<dbReference type="GO" id="GO:0006412">
    <property type="term" value="P:translation"/>
    <property type="evidence" value="ECO:0007669"/>
    <property type="project" value="UniProtKB-UniRule"/>
</dbReference>
<dbReference type="CDD" id="cd00432">
    <property type="entry name" value="Ribosomal_L18_L5e"/>
    <property type="match status" value="1"/>
</dbReference>
<dbReference type="FunFam" id="3.30.420.100:FF:000001">
    <property type="entry name" value="50S ribosomal protein L18"/>
    <property type="match status" value="1"/>
</dbReference>
<dbReference type="Gene3D" id="3.30.420.100">
    <property type="match status" value="1"/>
</dbReference>
<dbReference type="HAMAP" id="MF_01337_B">
    <property type="entry name" value="Ribosomal_uL18_B"/>
    <property type="match status" value="1"/>
</dbReference>
<dbReference type="InterPro" id="IPR004389">
    <property type="entry name" value="Ribosomal_uL18_bac-type"/>
</dbReference>
<dbReference type="InterPro" id="IPR005484">
    <property type="entry name" value="Ribosomal_uL18_bac/euk"/>
</dbReference>
<dbReference type="NCBIfam" id="TIGR00060">
    <property type="entry name" value="L18_bact"/>
    <property type="match status" value="1"/>
</dbReference>
<dbReference type="PANTHER" id="PTHR12899">
    <property type="entry name" value="39S RIBOSOMAL PROTEIN L18, MITOCHONDRIAL"/>
    <property type="match status" value="1"/>
</dbReference>
<dbReference type="PANTHER" id="PTHR12899:SF3">
    <property type="entry name" value="LARGE RIBOSOMAL SUBUNIT PROTEIN UL18M"/>
    <property type="match status" value="1"/>
</dbReference>
<dbReference type="Pfam" id="PF00861">
    <property type="entry name" value="Ribosomal_L18p"/>
    <property type="match status" value="1"/>
</dbReference>
<dbReference type="SUPFAM" id="SSF53137">
    <property type="entry name" value="Translational machinery components"/>
    <property type="match status" value="1"/>
</dbReference>
<organism>
    <name type="scientific">Pelotomaculum thermopropionicum (strain DSM 13744 / JCM 10971 / SI)</name>
    <dbReference type="NCBI Taxonomy" id="370438"/>
    <lineage>
        <taxon>Bacteria</taxon>
        <taxon>Bacillati</taxon>
        <taxon>Bacillota</taxon>
        <taxon>Clostridia</taxon>
        <taxon>Eubacteriales</taxon>
        <taxon>Desulfotomaculaceae</taxon>
        <taxon>Pelotomaculum</taxon>
    </lineage>
</organism>
<feature type="chain" id="PRO_1000086675" description="Large ribosomal subunit protein uL18">
    <location>
        <begin position="1"/>
        <end position="122"/>
    </location>
</feature>
<feature type="region of interest" description="Disordered" evidence="2">
    <location>
        <begin position="1"/>
        <end position="22"/>
    </location>
</feature>
<feature type="compositionally biased region" description="Basic and acidic residues" evidence="2">
    <location>
        <begin position="1"/>
        <end position="11"/>
    </location>
</feature>
<feature type="compositionally biased region" description="Basic residues" evidence="2">
    <location>
        <begin position="12"/>
        <end position="22"/>
    </location>
</feature>
<protein>
    <recommendedName>
        <fullName evidence="1">Large ribosomal subunit protein uL18</fullName>
    </recommendedName>
    <alternativeName>
        <fullName evidence="3">50S ribosomal protein L18</fullName>
    </alternativeName>
</protein>
<name>RL18_PELTS</name>